<name>TAM_CHOCO</name>
<accession>Q0VZ68</accession>
<reference evidence="8 9" key="1">
    <citation type="journal article" date="2006" name="Chem. Biol.">
        <title>Molecular and biochemical studies of chondramide formation-highly cytotoxic natural products from Chondromyces crocatus Cm c5.</title>
        <authorList>
            <person name="Rachid S."/>
            <person name="Krug D."/>
            <person name="Kunze B."/>
            <person name="Kochems I."/>
            <person name="Scharfe M."/>
            <person name="Zabriskie T.M."/>
            <person name="Blocker H."/>
            <person name="Muller R."/>
        </authorList>
    </citation>
    <scope>NUCLEOTIDE SEQUENCE [GENOMIC DNA]</scope>
    <scope>FUNCTION</scope>
    <source>
        <strain evidence="9">DSM 14714 / JCM 12616 / Cm c5</strain>
    </source>
</reference>
<reference evidence="8" key="2">
    <citation type="journal article" date="2007" name="J. Biol. Chem.">
        <title>Biosynthesis of (R)-beta-tyrosine and its incorporation into the highly cytotoxic chondramides produced by Chondromyces crocatus.</title>
        <authorList>
            <person name="Rachid S."/>
            <person name="Krug D."/>
            <person name="Weissman K.J."/>
            <person name="Muller R."/>
        </authorList>
    </citation>
    <scope>FUNCTION</scope>
    <source>
        <strain evidence="5">DSM 14714 / JCM 12616 / Cm c5</strain>
    </source>
</reference>
<reference evidence="8" key="3">
    <citation type="journal article" date="2009" name="ChemBioChem">
        <title>Discovery of additional members of the tyrosine aminomutase enzyme family and the mutational analysis of CmdF.</title>
        <authorList>
            <person name="Krug D."/>
            <person name="Muller R."/>
        </authorList>
    </citation>
    <scope>FUNCTION</scope>
    <scope>CATALYTIC ACTIVITY</scope>
    <scope>BIOPHYSICOCHEMICAL PROPERTIES</scope>
    <scope>MUTAGENESIS OF PHE-57; 60-LEU--ILE-65; 79-ARG--ALA-83; GLY-184; LYS-242; 275-VAL--GLY-288; PRO-377; 399-GLU--THR-406; GLU-399 AND 427-ASN--VAL-433</scope>
    <source>
        <strain evidence="6">DSM 14714 / JCM 12616 / Cm c5</strain>
    </source>
</reference>
<dbReference type="EC" id="5.4.3.6"/>
<dbReference type="EC" id="4.3.1.23"/>
<dbReference type="EMBL" id="AM179409">
    <property type="protein sequence ID" value="CAJ46694.1"/>
    <property type="molecule type" value="Genomic_DNA"/>
</dbReference>
<dbReference type="RefSeq" id="WP_050432503.1">
    <property type="nucleotide sequence ID" value="NZ_CP012159.1"/>
</dbReference>
<dbReference type="SMR" id="Q0VZ68"/>
<dbReference type="STRING" id="52.CMC5_047490"/>
<dbReference type="OrthoDB" id="9806955at2"/>
<dbReference type="BRENDA" id="5.4.3.6">
    <property type="organism ID" value="11879"/>
</dbReference>
<dbReference type="SABIO-RK" id="Q0VZ68"/>
<dbReference type="GO" id="GO:0016841">
    <property type="term" value="F:ammonia-lyase activity"/>
    <property type="evidence" value="ECO:0000314"/>
    <property type="project" value="UniProtKB"/>
</dbReference>
<dbReference type="GO" id="GO:0050368">
    <property type="term" value="F:L-tyrosine 2,3-aminomutase activity"/>
    <property type="evidence" value="ECO:0000314"/>
    <property type="project" value="UniProtKB"/>
</dbReference>
<dbReference type="GO" id="GO:0052883">
    <property type="term" value="F:tyrosine ammonia-lyase activity"/>
    <property type="evidence" value="ECO:0007669"/>
    <property type="project" value="UniProtKB-EC"/>
</dbReference>
<dbReference type="GO" id="GO:0009403">
    <property type="term" value="P:toxin biosynthetic process"/>
    <property type="evidence" value="ECO:0000314"/>
    <property type="project" value="UniProtKB"/>
</dbReference>
<dbReference type="CDD" id="cd00332">
    <property type="entry name" value="PAL-HAL"/>
    <property type="match status" value="1"/>
</dbReference>
<dbReference type="FunFam" id="1.10.275.10:FF:000005">
    <property type="entry name" value="Histidine ammonia-lyase"/>
    <property type="match status" value="1"/>
</dbReference>
<dbReference type="FunFam" id="1.20.200.10:FF:000012">
    <property type="entry name" value="Tyrosine ammonia-lyase"/>
    <property type="match status" value="1"/>
</dbReference>
<dbReference type="Gene3D" id="1.20.200.10">
    <property type="entry name" value="Fumarase/aspartase (Central domain)"/>
    <property type="match status" value="1"/>
</dbReference>
<dbReference type="Gene3D" id="1.10.275.10">
    <property type="entry name" value="Fumarase/aspartase (N-terminal domain)"/>
    <property type="match status" value="1"/>
</dbReference>
<dbReference type="InterPro" id="IPR001106">
    <property type="entry name" value="Aromatic_Lyase"/>
</dbReference>
<dbReference type="InterPro" id="IPR024083">
    <property type="entry name" value="Fumarase/histidase_N"/>
</dbReference>
<dbReference type="InterPro" id="IPR008948">
    <property type="entry name" value="L-Aspartase-like"/>
</dbReference>
<dbReference type="InterPro" id="IPR022313">
    <property type="entry name" value="Phe/His_NH3-lyase_AS"/>
</dbReference>
<dbReference type="InterPro" id="IPR022314">
    <property type="entry name" value="Tyr_aminomutase"/>
</dbReference>
<dbReference type="NCBIfam" id="TIGR03832">
    <property type="entry name" value="Tyr_2_3_mutase"/>
    <property type="match status" value="1"/>
</dbReference>
<dbReference type="PANTHER" id="PTHR10362">
    <property type="entry name" value="HISTIDINE AMMONIA-LYASE"/>
    <property type="match status" value="1"/>
</dbReference>
<dbReference type="Pfam" id="PF00221">
    <property type="entry name" value="Lyase_aromatic"/>
    <property type="match status" value="1"/>
</dbReference>
<dbReference type="SUPFAM" id="SSF48557">
    <property type="entry name" value="L-aspartase-like"/>
    <property type="match status" value="1"/>
</dbReference>
<dbReference type="PROSITE" id="PS00488">
    <property type="entry name" value="PAL_HISTIDASE"/>
    <property type="match status" value="1"/>
</dbReference>
<keyword id="KW-0413">Isomerase</keyword>
<keyword id="KW-0456">Lyase</keyword>
<protein>
    <recommendedName>
        <fullName evidence="7">Tyrosine 2,3-aminomutase</fullName>
        <ecNumber>5.4.3.6</ecNumber>
    </recommendedName>
    <alternativeName>
        <fullName evidence="7">Tyrosine ammonia-lyase</fullName>
        <ecNumber>4.3.1.23</ecNumber>
    </alternativeName>
</protein>
<gene>
    <name evidence="9" type="primary">cmdF</name>
</gene>
<sequence length="531" mass="56901">MKITGSNLSIYDVADVCMKRATVELDPSQLERVAVAHERTQAWGEAQHPIYGVNTGFGELVPVMIPRQHKRELQENLIRSHAAGGGEPFADDVVRAIMLARLNCLMKGYSGASVETVKLLAEFINRGIHPVIPQQGSLGASGDLSPLSHIALALIGEGTVSFKGQVRKTGDVLREEGLKPLELGFKGGLTLINGTSAMTGAACVALGRAYHLFRLALLATADFVQCLGGSTGPFEERGHLPKNHSGQVIVAREIRKLLAGSQLTSDHQDLMKEMVARSGVGNDVVDTGVYLQDAYTLRAVPQILGPVLDTLDFARKLIEEELNSTNDNPLIFDVPEQTFHGANFHGQYVAMACDYLNIAVTEIGVLAERQLNRLVDPNINGKLPPFLASAHSGLLCGFEGGQYLATSIASENLDLAAPSSIKSLPSNGSNQDVVSMGTTSARKSLRLCENVGTIVSTLIAACNQAGHILGNERFSPPIRELHGELSRSVPLYQDDSPIFELFQTVRAFVGGDGFRAHLVTHLDLAATTASS</sequence>
<comment type="function">
    <text evidence="4 5 6">Has aminomutase and, to a lesser extent, ammonia-lyase activity. Primarily, catalyzes the rearrangement of L-tyrosine to R-beta-tyrosine, which is incorporated into secondary metabolites called chondramides. The aminomutase activity mainly produces R-beta-tyrosine but also S-beta tyrosine in smaller amounts. Does not accept D-tyrosine, L-histidine or L-phenylalanine as substrates.</text>
</comment>
<comment type="catalytic activity">
    <reaction evidence="6">
        <text>L-tyrosine = 3-amino-3-(4-hydroxyphenyl)propanoate</text>
        <dbReference type="Rhea" id="RHEA:15781"/>
        <dbReference type="ChEBI" id="CHEBI:57956"/>
        <dbReference type="ChEBI" id="CHEBI:58315"/>
        <dbReference type="EC" id="5.4.3.6"/>
    </reaction>
</comment>
<comment type="catalytic activity">
    <reaction evidence="6">
        <text>L-tyrosine = (E)-4-coumarate + NH4(+)</text>
        <dbReference type="Rhea" id="RHEA:24906"/>
        <dbReference type="ChEBI" id="CHEBI:12876"/>
        <dbReference type="ChEBI" id="CHEBI:28938"/>
        <dbReference type="ChEBI" id="CHEBI:58315"/>
        <dbReference type="EC" id="4.3.1.23"/>
    </reaction>
</comment>
<comment type="biophysicochemical properties">
    <kinetics>
        <KM evidence="6">377 uM for L-tyrosine (tyrosine 2,3-aminomutase activity)</KM>
    </kinetics>
</comment>
<comment type="subunit">
    <text evidence="1">Homotetramer; dimer of dimers.</text>
</comment>
<comment type="PTM">
    <text evidence="2">Contains an active site 4-methylidene-imidazol-5-one (MIO), which is formed autocatalytically by cyclization and dehydration of residues Ala-Ser-Gly.</text>
</comment>
<comment type="miscellaneous">
    <text>Chondramides are secondary metabolites with antifungal and cytotoxic activity. They are non-ribosomally produced depsipeptides consisting of a polyketide chain and 3 amino acids (alanine, N-methyltryptophan and beta-tyrosine or alpha-methoxy-beta-tyrosine).</text>
</comment>
<comment type="similarity">
    <text evidence="6">Belongs to the TAL/TAM family.</text>
</comment>
<organism>
    <name type="scientific">Chondromyces crocatus</name>
    <dbReference type="NCBI Taxonomy" id="52"/>
    <lineage>
        <taxon>Bacteria</taxon>
        <taxon>Pseudomonadati</taxon>
        <taxon>Myxococcota</taxon>
        <taxon>Polyangia</taxon>
        <taxon>Polyangiales</taxon>
        <taxon>Polyangiaceae</taxon>
        <taxon>Chondromyces</taxon>
    </lineage>
</organism>
<proteinExistence type="evidence at protein level"/>
<evidence type="ECO:0000250" key="1"/>
<evidence type="ECO:0000250" key="2">
    <source>
        <dbReference type="UniProtKB" id="P21310"/>
    </source>
</evidence>
<evidence type="ECO:0000255" key="3">
    <source>
        <dbReference type="PROSITE-ProRule" id="PRU10122"/>
    </source>
</evidence>
<evidence type="ECO:0000269" key="4">
    <source>
    </source>
</evidence>
<evidence type="ECO:0000269" key="5">
    <source>
    </source>
</evidence>
<evidence type="ECO:0000269" key="6">
    <source>
    </source>
</evidence>
<evidence type="ECO:0000303" key="7">
    <source>
    </source>
</evidence>
<evidence type="ECO:0000305" key="8"/>
<evidence type="ECO:0000312" key="9">
    <source>
        <dbReference type="EMBL" id="CAJ46694.1"/>
    </source>
</evidence>
<feature type="chain" id="PRO_0000407375" description="Tyrosine 2,3-aminomutase">
    <location>
        <begin position="1"/>
        <end position="531"/>
    </location>
</feature>
<feature type="active site" description="Proton donor/acceptor" evidence="1">
    <location>
        <position position="51"/>
    </location>
</feature>
<feature type="binding site" evidence="1">
    <location>
        <position position="81"/>
    </location>
    <ligand>
        <name>substrate</name>
    </ligand>
</feature>
<feature type="binding site" evidence="1">
    <location>
        <position position="193"/>
    </location>
    <ligand>
        <name>substrate</name>
    </ligand>
</feature>
<feature type="binding site" evidence="1">
    <location>
        <position position="298"/>
    </location>
    <ligand>
        <name>substrate</name>
    </ligand>
</feature>
<feature type="modified residue" description="2,3-didehydroalanine (Ser)" evidence="2 3">
    <location>
        <position position="141"/>
    </location>
</feature>
<feature type="cross-link" description="5-imidazolinone (Ala-Gly)" evidence="2">
    <location>
        <begin position="140"/>
        <end position="142"/>
    </location>
</feature>
<feature type="mutagenesis site" description="Loss of aminomutase activity." evidence="6">
    <original>F</original>
    <variation>Y</variation>
    <location>
        <position position="57"/>
    </location>
</feature>
<feature type="mutagenesis site" description="Shift towards ammonia lyase activity." evidence="6">
    <original>LVPVMI</original>
    <variation>MIYMLV</variation>
    <location>
        <begin position="60"/>
        <end position="65"/>
    </location>
</feature>
<feature type="mutagenesis site" description="Total loss of aminomutase activity." evidence="6">
    <original>RSHAA</original>
    <variation>YHLAT</variation>
    <location>
        <begin position="79"/>
        <end position="83"/>
    </location>
</feature>
<feature type="mutagenesis site" description="Total loss of aminomutase activity." evidence="6">
    <original>RSHA</original>
    <variation>TFLS</variation>
    <location>
        <begin position="79"/>
        <end position="82"/>
    </location>
</feature>
<feature type="mutagenesis site" description="Gain of aminomutase activity." evidence="6">
    <original>G</original>
    <variation>R</variation>
    <location>
        <position position="184"/>
    </location>
</feature>
<feature type="mutagenesis site" description="Gain of aminomutase activity." evidence="6">
    <original>K</original>
    <variation>R</variation>
    <location>
        <position position="242"/>
    </location>
</feature>
<feature type="mutagenesis site" description="Total loss of aminomutase activity." evidence="6">
    <location>
        <begin position="275"/>
        <end position="288"/>
    </location>
</feature>
<feature type="mutagenesis site" description="No effect." evidence="6">
    <original>P</original>
    <variation>R</variation>
    <location>
        <position position="377"/>
    </location>
</feature>
<feature type="mutagenesis site" description="No effect." evidence="6">
    <original>C</original>
    <variation>S</variation>
    <location>
        <position position="396"/>
    </location>
</feature>
<feature type="mutagenesis site" description="Residual aminomutase activity." evidence="6">
    <original>EGGQYLAT</original>
    <variation>MIAQVTSA</variation>
    <location>
        <begin position="399"/>
        <end position="406"/>
    </location>
</feature>
<feature type="mutagenesis site" description="Loss of aminomutase activity and increased product racemization. Gain of ammonia-lyase activity." evidence="6">
    <original>E</original>
    <variation>A</variation>
    <location>
        <position position="399"/>
    </location>
</feature>
<feature type="mutagenesis site" description="Loss of aminomutase and ammonia-lyase activity. Higher enantiomeric excess of (R)-beta-tyrosine." evidence="6">
    <original>E</original>
    <variation>K</variation>
    <location>
        <position position="399"/>
    </location>
</feature>
<feature type="mutagenesis site" description="Loss of aminomutase and ammonia-lyase activity." evidence="6">
    <original>E</original>
    <variation>M</variation>
    <location>
        <position position="399"/>
    </location>
</feature>
<feature type="mutagenesis site" description="Total loss of aminomutase activity." evidence="6">
    <original>NGSNQDV</original>
    <variation>SAGREDH</variation>
    <location>
        <begin position="427"/>
        <end position="433"/>
    </location>
</feature>
<feature type="mutagenesis site" description="Total loss of aminomutase activity." evidence="6">
    <original>NGSNQDV</original>
    <variation>SANQEDH</variation>
    <location>
        <begin position="427"/>
        <end position="433"/>
    </location>
</feature>